<name>PSRP_DELAS</name>
<evidence type="ECO:0000255" key="1">
    <source>
        <dbReference type="HAMAP-Rule" id="MF_01062"/>
    </source>
</evidence>
<comment type="function">
    <text evidence="1">Bifunctional serine/threonine kinase and phosphorylase involved in the regulation of the phosphoenolpyruvate synthase (PEPS) by catalyzing its phosphorylation/dephosphorylation.</text>
</comment>
<comment type="catalytic activity">
    <reaction evidence="1">
        <text>[pyruvate, water dikinase] + ADP = [pyruvate, water dikinase]-phosphate + AMP + H(+)</text>
        <dbReference type="Rhea" id="RHEA:46020"/>
        <dbReference type="Rhea" id="RHEA-COMP:11425"/>
        <dbReference type="Rhea" id="RHEA-COMP:11426"/>
        <dbReference type="ChEBI" id="CHEBI:15378"/>
        <dbReference type="ChEBI" id="CHEBI:43176"/>
        <dbReference type="ChEBI" id="CHEBI:68546"/>
        <dbReference type="ChEBI" id="CHEBI:456215"/>
        <dbReference type="ChEBI" id="CHEBI:456216"/>
        <dbReference type="EC" id="2.7.11.33"/>
    </reaction>
</comment>
<comment type="catalytic activity">
    <reaction evidence="1">
        <text>[pyruvate, water dikinase]-phosphate + phosphate + H(+) = [pyruvate, water dikinase] + diphosphate</text>
        <dbReference type="Rhea" id="RHEA:48580"/>
        <dbReference type="Rhea" id="RHEA-COMP:11425"/>
        <dbReference type="Rhea" id="RHEA-COMP:11426"/>
        <dbReference type="ChEBI" id="CHEBI:15378"/>
        <dbReference type="ChEBI" id="CHEBI:33019"/>
        <dbReference type="ChEBI" id="CHEBI:43176"/>
        <dbReference type="ChEBI" id="CHEBI:43474"/>
        <dbReference type="ChEBI" id="CHEBI:68546"/>
        <dbReference type="EC" id="2.7.4.28"/>
    </reaction>
</comment>
<comment type="similarity">
    <text evidence="1">Belongs to the pyruvate, phosphate/water dikinase regulatory protein family. PSRP subfamily.</text>
</comment>
<gene>
    <name type="ordered locus">Daci_5065</name>
</gene>
<protein>
    <recommendedName>
        <fullName evidence="1">Putative phosphoenolpyruvate synthase regulatory protein</fullName>
        <shortName evidence="1">PEP synthase regulatory protein</shortName>
        <shortName evidence="1">PSRP</shortName>
        <ecNumber evidence="1">2.7.11.33</ecNumber>
        <ecNumber evidence="1">2.7.4.28</ecNumber>
    </recommendedName>
    <alternativeName>
        <fullName evidence="1">Pyruvate, water dikinase regulatory protein</fullName>
    </alternativeName>
</protein>
<sequence length="273" mass="30757">MHTHTIFVISDGTGITAETFGTAIMAQFDTKSRLVRIPFVDTMDKVHQAVRQINHVAESESHKPIVFTTLVNQDMLDLIESQCKGKVFDMFGTFVRPLELELGQKSLHRVGRFADISESKEYLERMEAINYTLAHDDGQTHQDLTGADVILVGVSRSGKTPTSLYLAMQFGLKVANYPLIPEDFERKQLPPALVPSRKKLFGLTIDPQRLSSIRNERRPDSKYASLVNCRYEVAEAESMMRRSGIPWLSSTTKSIEEIATTILQEVLPQHLGH</sequence>
<feature type="chain" id="PRO_1000136465" description="Putative phosphoenolpyruvate synthase regulatory protein">
    <location>
        <begin position="1"/>
        <end position="273"/>
    </location>
</feature>
<feature type="binding site" evidence="1">
    <location>
        <begin position="153"/>
        <end position="160"/>
    </location>
    <ligand>
        <name>ADP</name>
        <dbReference type="ChEBI" id="CHEBI:456216"/>
    </ligand>
</feature>
<accession>A9BMZ9</accession>
<dbReference type="EC" id="2.7.11.33" evidence="1"/>
<dbReference type="EC" id="2.7.4.28" evidence="1"/>
<dbReference type="EMBL" id="CP000884">
    <property type="protein sequence ID" value="ABX37694.1"/>
    <property type="molecule type" value="Genomic_DNA"/>
</dbReference>
<dbReference type="RefSeq" id="WP_012206864.1">
    <property type="nucleotide sequence ID" value="NC_010002.1"/>
</dbReference>
<dbReference type="SMR" id="A9BMZ9"/>
<dbReference type="STRING" id="398578.Daci_5065"/>
<dbReference type="GeneID" id="24116693"/>
<dbReference type="KEGG" id="dac:Daci_5065"/>
<dbReference type="eggNOG" id="COG1806">
    <property type="taxonomic scope" value="Bacteria"/>
</dbReference>
<dbReference type="HOGENOM" id="CLU_046206_1_0_4"/>
<dbReference type="Proteomes" id="UP000000784">
    <property type="component" value="Chromosome"/>
</dbReference>
<dbReference type="GO" id="GO:0043531">
    <property type="term" value="F:ADP binding"/>
    <property type="evidence" value="ECO:0007669"/>
    <property type="project" value="UniProtKB-UniRule"/>
</dbReference>
<dbReference type="GO" id="GO:0005524">
    <property type="term" value="F:ATP binding"/>
    <property type="evidence" value="ECO:0007669"/>
    <property type="project" value="InterPro"/>
</dbReference>
<dbReference type="GO" id="GO:0016776">
    <property type="term" value="F:phosphotransferase activity, phosphate group as acceptor"/>
    <property type="evidence" value="ECO:0007669"/>
    <property type="project" value="UniProtKB-UniRule"/>
</dbReference>
<dbReference type="GO" id="GO:0004674">
    <property type="term" value="F:protein serine/threonine kinase activity"/>
    <property type="evidence" value="ECO:0007669"/>
    <property type="project" value="UniProtKB-UniRule"/>
</dbReference>
<dbReference type="HAMAP" id="MF_01062">
    <property type="entry name" value="PSRP"/>
    <property type="match status" value="1"/>
</dbReference>
<dbReference type="InterPro" id="IPR005177">
    <property type="entry name" value="Kinase-pyrophosphorylase"/>
</dbReference>
<dbReference type="InterPro" id="IPR026530">
    <property type="entry name" value="PSRP"/>
</dbReference>
<dbReference type="NCBIfam" id="NF003742">
    <property type="entry name" value="PRK05339.1"/>
    <property type="match status" value="1"/>
</dbReference>
<dbReference type="PANTHER" id="PTHR31756">
    <property type="entry name" value="PYRUVATE, PHOSPHATE DIKINASE REGULATORY PROTEIN 1, CHLOROPLASTIC"/>
    <property type="match status" value="1"/>
</dbReference>
<dbReference type="PANTHER" id="PTHR31756:SF3">
    <property type="entry name" value="PYRUVATE, PHOSPHATE DIKINASE REGULATORY PROTEIN 1, CHLOROPLASTIC"/>
    <property type="match status" value="1"/>
</dbReference>
<dbReference type="Pfam" id="PF03618">
    <property type="entry name" value="Kinase-PPPase"/>
    <property type="match status" value="1"/>
</dbReference>
<organism>
    <name type="scientific">Delftia acidovorans (strain DSM 14801 / SPH-1)</name>
    <dbReference type="NCBI Taxonomy" id="398578"/>
    <lineage>
        <taxon>Bacteria</taxon>
        <taxon>Pseudomonadati</taxon>
        <taxon>Pseudomonadota</taxon>
        <taxon>Betaproteobacteria</taxon>
        <taxon>Burkholderiales</taxon>
        <taxon>Comamonadaceae</taxon>
        <taxon>Delftia</taxon>
    </lineage>
</organism>
<keyword id="KW-0418">Kinase</keyword>
<keyword id="KW-0547">Nucleotide-binding</keyword>
<keyword id="KW-1185">Reference proteome</keyword>
<keyword id="KW-0723">Serine/threonine-protein kinase</keyword>
<keyword id="KW-0808">Transferase</keyword>
<reference key="1">
    <citation type="submission" date="2007-11" db="EMBL/GenBank/DDBJ databases">
        <title>Complete sequence of Delftia acidovorans DSM 14801 / SPH-1.</title>
        <authorList>
            <person name="Copeland A."/>
            <person name="Lucas S."/>
            <person name="Lapidus A."/>
            <person name="Barry K."/>
            <person name="Glavina del Rio T."/>
            <person name="Dalin E."/>
            <person name="Tice H."/>
            <person name="Pitluck S."/>
            <person name="Lowry S."/>
            <person name="Clum A."/>
            <person name="Schmutz J."/>
            <person name="Larimer F."/>
            <person name="Land M."/>
            <person name="Hauser L."/>
            <person name="Kyrpides N."/>
            <person name="Kim E."/>
            <person name="Schleheck D."/>
            <person name="Richardson P."/>
        </authorList>
    </citation>
    <scope>NUCLEOTIDE SEQUENCE [LARGE SCALE GENOMIC DNA]</scope>
    <source>
        <strain>DSM 14801 / SPH-1</strain>
    </source>
</reference>
<proteinExistence type="inferred from homology"/>